<keyword id="KW-0687">Ribonucleoprotein</keyword>
<keyword id="KW-0689">Ribosomal protein</keyword>
<keyword id="KW-0694">RNA-binding</keyword>
<keyword id="KW-0699">rRNA-binding</keyword>
<comment type="function">
    <text evidence="1">Located on the platform of the 30S subunit, it bridges several disparate RNA helices of the 16S rRNA. Forms part of the Shine-Dalgarno cleft in the 70S ribosome.</text>
</comment>
<comment type="subunit">
    <text evidence="1">Part of the 30S ribosomal subunit. Interacts with proteins S7 and S18. Binds to IF-3.</text>
</comment>
<comment type="similarity">
    <text evidence="1">Belongs to the universal ribosomal protein uS11 family.</text>
</comment>
<feature type="chain" id="PRO_0000294751" description="Small ribosomal subunit protein uS11">
    <location>
        <begin position="1"/>
        <end position="127"/>
    </location>
</feature>
<organism>
    <name type="scientific">Ehrlichia ruminantium (strain Welgevonden)</name>
    <dbReference type="NCBI Taxonomy" id="254945"/>
    <lineage>
        <taxon>Bacteria</taxon>
        <taxon>Pseudomonadati</taxon>
        <taxon>Pseudomonadota</taxon>
        <taxon>Alphaproteobacteria</taxon>
        <taxon>Rickettsiales</taxon>
        <taxon>Anaplasmataceae</taxon>
        <taxon>Ehrlichia</taxon>
    </lineage>
</organism>
<accession>Q5HAU4</accession>
<accession>Q5FD37</accession>
<sequence length="127" mass="13485">MSVTYNKKKKRNVVVGVVHIHATYNNIIVTITDQQGHSLVSTSAGAYGFKGSKKATPYAAQETAGHAVKTVVEQNGMKTVSIKVSGPGAGREAAIRAVQACNLNVTSIKDTTKLPHNGCKLPGRRRV</sequence>
<evidence type="ECO:0000255" key="1">
    <source>
        <dbReference type="HAMAP-Rule" id="MF_01310"/>
    </source>
</evidence>
<evidence type="ECO:0000305" key="2"/>
<reference key="1">
    <citation type="journal article" date="2005" name="Proc. Natl. Acad. Sci. U.S.A.">
        <title>The genome of the heartwater agent Ehrlichia ruminantium contains multiple tandem repeats of actively variable copy number.</title>
        <authorList>
            <person name="Collins N.E."/>
            <person name="Liebenberg J."/>
            <person name="de Villiers E.P."/>
            <person name="Brayton K.A."/>
            <person name="Louw E."/>
            <person name="Pretorius A."/>
            <person name="Faber F.E."/>
            <person name="van Heerden H."/>
            <person name="Josemans A."/>
            <person name="van Kleef M."/>
            <person name="Steyn H.C."/>
            <person name="van Strijp M.F."/>
            <person name="Zweygarth E."/>
            <person name="Jongejan F."/>
            <person name="Maillard J.C."/>
            <person name="Berthier D."/>
            <person name="Botha M."/>
            <person name="Joubert F."/>
            <person name="Corton C.H."/>
            <person name="Thomson N.R."/>
            <person name="Allsopp M.T."/>
            <person name="Allsopp B.A."/>
        </authorList>
    </citation>
    <scope>NUCLEOTIDE SEQUENCE [LARGE SCALE GENOMIC DNA]</scope>
    <source>
        <strain>Welgevonden</strain>
    </source>
</reference>
<reference key="2">
    <citation type="journal article" date="2006" name="J. Bacteriol.">
        <title>Comparative genomic analysis of three strains of Ehrlichia ruminantium reveals an active process of genome size plasticity.</title>
        <authorList>
            <person name="Frutos R."/>
            <person name="Viari A."/>
            <person name="Ferraz C."/>
            <person name="Morgat A."/>
            <person name="Eychenie S."/>
            <person name="Kandassamy Y."/>
            <person name="Chantal I."/>
            <person name="Bensaid A."/>
            <person name="Coissac E."/>
            <person name="Vachiery N."/>
            <person name="Demaille J."/>
            <person name="Martinez D."/>
        </authorList>
    </citation>
    <scope>NUCLEOTIDE SEQUENCE [LARGE SCALE GENOMIC DNA]</scope>
    <source>
        <strain>Welgevonden</strain>
    </source>
</reference>
<protein>
    <recommendedName>
        <fullName evidence="1">Small ribosomal subunit protein uS11</fullName>
    </recommendedName>
    <alternativeName>
        <fullName evidence="2">30S ribosomal protein S11</fullName>
    </alternativeName>
</protein>
<name>RS11_EHRRW</name>
<proteinExistence type="inferred from homology"/>
<gene>
    <name evidence="1" type="primary">rpsK</name>
    <name type="ordered locus">Erum5860</name>
    <name type="ordered locus">ERWE_CDS_06160</name>
</gene>
<dbReference type="EMBL" id="CR767821">
    <property type="protein sequence ID" value="CAH58317.1"/>
    <property type="molecule type" value="Genomic_DNA"/>
</dbReference>
<dbReference type="EMBL" id="CR925678">
    <property type="protein sequence ID" value="CAI27110.1"/>
    <property type="molecule type" value="Genomic_DNA"/>
</dbReference>
<dbReference type="RefSeq" id="WP_011155267.1">
    <property type="nucleotide sequence ID" value="NC_005295.2"/>
</dbReference>
<dbReference type="SMR" id="Q5HAU4"/>
<dbReference type="GeneID" id="33058140"/>
<dbReference type="KEGG" id="eru:Erum5860"/>
<dbReference type="KEGG" id="erw:ERWE_CDS_06160"/>
<dbReference type="eggNOG" id="COG0100">
    <property type="taxonomic scope" value="Bacteria"/>
</dbReference>
<dbReference type="HOGENOM" id="CLU_072439_5_0_5"/>
<dbReference type="Proteomes" id="UP000001021">
    <property type="component" value="Chromosome"/>
</dbReference>
<dbReference type="GO" id="GO:1990904">
    <property type="term" value="C:ribonucleoprotein complex"/>
    <property type="evidence" value="ECO:0007669"/>
    <property type="project" value="UniProtKB-KW"/>
</dbReference>
<dbReference type="GO" id="GO:0005840">
    <property type="term" value="C:ribosome"/>
    <property type="evidence" value="ECO:0007669"/>
    <property type="project" value="UniProtKB-KW"/>
</dbReference>
<dbReference type="GO" id="GO:0019843">
    <property type="term" value="F:rRNA binding"/>
    <property type="evidence" value="ECO:0007669"/>
    <property type="project" value="UniProtKB-UniRule"/>
</dbReference>
<dbReference type="GO" id="GO:0003735">
    <property type="term" value="F:structural constituent of ribosome"/>
    <property type="evidence" value="ECO:0007669"/>
    <property type="project" value="InterPro"/>
</dbReference>
<dbReference type="GO" id="GO:0006412">
    <property type="term" value="P:translation"/>
    <property type="evidence" value="ECO:0007669"/>
    <property type="project" value="UniProtKB-UniRule"/>
</dbReference>
<dbReference type="Gene3D" id="3.30.420.80">
    <property type="entry name" value="Ribosomal protein S11"/>
    <property type="match status" value="1"/>
</dbReference>
<dbReference type="HAMAP" id="MF_01310">
    <property type="entry name" value="Ribosomal_uS11"/>
    <property type="match status" value="1"/>
</dbReference>
<dbReference type="InterPro" id="IPR001971">
    <property type="entry name" value="Ribosomal_uS11"/>
</dbReference>
<dbReference type="InterPro" id="IPR019981">
    <property type="entry name" value="Ribosomal_uS11_bac-type"/>
</dbReference>
<dbReference type="InterPro" id="IPR036967">
    <property type="entry name" value="Ribosomal_uS11_sf"/>
</dbReference>
<dbReference type="NCBIfam" id="NF003698">
    <property type="entry name" value="PRK05309.1"/>
    <property type="match status" value="1"/>
</dbReference>
<dbReference type="NCBIfam" id="TIGR03632">
    <property type="entry name" value="uS11_bact"/>
    <property type="match status" value="1"/>
</dbReference>
<dbReference type="PANTHER" id="PTHR11759">
    <property type="entry name" value="40S RIBOSOMAL PROTEIN S14/30S RIBOSOMAL PROTEIN S11"/>
    <property type="match status" value="1"/>
</dbReference>
<dbReference type="Pfam" id="PF00411">
    <property type="entry name" value="Ribosomal_S11"/>
    <property type="match status" value="1"/>
</dbReference>
<dbReference type="PIRSF" id="PIRSF002131">
    <property type="entry name" value="Ribosomal_S11"/>
    <property type="match status" value="1"/>
</dbReference>
<dbReference type="SUPFAM" id="SSF53137">
    <property type="entry name" value="Translational machinery components"/>
    <property type="match status" value="1"/>
</dbReference>